<sequence length="84" mass="9457">MIMAAGSTGERPFFEIITSIRYWIIHAVTLPAIFIAGFLFVYTGLAYDAFGTPRPDSYFQSSESKAPVVTQRYEAKSQLDLRTK</sequence>
<organism>
    <name type="scientific">Prochlorococcus marinus (strain AS9601)</name>
    <dbReference type="NCBI Taxonomy" id="146891"/>
    <lineage>
        <taxon>Bacteria</taxon>
        <taxon>Bacillati</taxon>
        <taxon>Cyanobacteriota</taxon>
        <taxon>Cyanophyceae</taxon>
        <taxon>Synechococcales</taxon>
        <taxon>Prochlorococcaceae</taxon>
        <taxon>Prochlorococcus</taxon>
    </lineage>
</organism>
<dbReference type="EMBL" id="CP000551">
    <property type="protein sequence ID" value="ABM69608.1"/>
    <property type="molecule type" value="Genomic_DNA"/>
</dbReference>
<dbReference type="SMR" id="A2BP97"/>
<dbReference type="STRING" id="146891.A9601_03201"/>
<dbReference type="KEGG" id="pmb:A9601_03201"/>
<dbReference type="eggNOG" id="ENOG5032RR6">
    <property type="taxonomic scope" value="Bacteria"/>
</dbReference>
<dbReference type="HOGENOM" id="CLU_194095_0_0_3"/>
<dbReference type="Proteomes" id="UP000002590">
    <property type="component" value="Chromosome"/>
</dbReference>
<dbReference type="GO" id="GO:0009523">
    <property type="term" value="C:photosystem II"/>
    <property type="evidence" value="ECO:0007669"/>
    <property type="project" value="UniProtKB-KW"/>
</dbReference>
<dbReference type="GO" id="GO:0031676">
    <property type="term" value="C:plasma membrane-derived thylakoid membrane"/>
    <property type="evidence" value="ECO:0007669"/>
    <property type="project" value="UniProtKB-SubCell"/>
</dbReference>
<dbReference type="GO" id="GO:0009055">
    <property type="term" value="F:electron transfer activity"/>
    <property type="evidence" value="ECO:0007669"/>
    <property type="project" value="UniProtKB-UniRule"/>
</dbReference>
<dbReference type="GO" id="GO:0020037">
    <property type="term" value="F:heme binding"/>
    <property type="evidence" value="ECO:0007669"/>
    <property type="project" value="InterPro"/>
</dbReference>
<dbReference type="GO" id="GO:0005506">
    <property type="term" value="F:iron ion binding"/>
    <property type="evidence" value="ECO:0007669"/>
    <property type="project" value="UniProtKB-UniRule"/>
</dbReference>
<dbReference type="GO" id="GO:0009767">
    <property type="term" value="P:photosynthetic electron transport chain"/>
    <property type="evidence" value="ECO:0007669"/>
    <property type="project" value="InterPro"/>
</dbReference>
<dbReference type="Gene3D" id="1.20.5.860">
    <property type="entry name" value="Photosystem II cytochrome b559, alpha subunit"/>
    <property type="match status" value="1"/>
</dbReference>
<dbReference type="HAMAP" id="MF_00642">
    <property type="entry name" value="PSII_PsbE"/>
    <property type="match status" value="1"/>
</dbReference>
<dbReference type="InterPro" id="IPR006217">
    <property type="entry name" value="PSII_cyt_b559_asu"/>
</dbReference>
<dbReference type="InterPro" id="IPR037025">
    <property type="entry name" value="PSII_cyt_b559_asu_sf"/>
</dbReference>
<dbReference type="InterPro" id="IPR013081">
    <property type="entry name" value="PSII_cyt_b559_N"/>
</dbReference>
<dbReference type="InterPro" id="IPR013082">
    <property type="entry name" value="PSII_cytb559_asu_lum"/>
</dbReference>
<dbReference type="NCBIfam" id="TIGR01332">
    <property type="entry name" value="cyt_b559_alpha"/>
    <property type="match status" value="1"/>
</dbReference>
<dbReference type="PANTHER" id="PTHR33391">
    <property type="entry name" value="CYTOCHROME B559 SUBUNIT BETA-RELATED"/>
    <property type="match status" value="1"/>
</dbReference>
<dbReference type="PANTHER" id="PTHR33391:SF9">
    <property type="entry name" value="CYTOCHROME B559 SUBUNIT BETA-RELATED"/>
    <property type="match status" value="1"/>
</dbReference>
<dbReference type="Pfam" id="PF00283">
    <property type="entry name" value="Cytochrom_B559"/>
    <property type="match status" value="1"/>
</dbReference>
<dbReference type="Pfam" id="PF00284">
    <property type="entry name" value="Cytochrom_B559a"/>
    <property type="match status" value="1"/>
</dbReference>
<dbReference type="PIRSF" id="PIRSF000036">
    <property type="entry name" value="PsbE"/>
    <property type="match status" value="1"/>
</dbReference>
<dbReference type="SUPFAM" id="SSF161045">
    <property type="entry name" value="Cytochrome b559 subunits"/>
    <property type="match status" value="1"/>
</dbReference>
<evidence type="ECO:0000255" key="1">
    <source>
        <dbReference type="HAMAP-Rule" id="MF_00642"/>
    </source>
</evidence>
<evidence type="ECO:0000305" key="2"/>
<comment type="function">
    <text evidence="1">This b-type cytochrome is tightly associated with the reaction center of photosystem II (PSII). PSII is a light-driven water:plastoquinone oxidoreductase that uses light energy to abstract electrons from H(2)O, generating O(2) and a proton gradient subsequently used for ATP formation. It consists of a core antenna complex that captures photons, and an electron transfer chain that converts photonic excitation into a charge separation.</text>
</comment>
<comment type="cofactor">
    <cofactor evidence="1">
        <name>heme b</name>
        <dbReference type="ChEBI" id="CHEBI:60344"/>
    </cofactor>
    <text evidence="1">With its partner (PsbF) binds heme. PSII binds additional chlorophylls, carotenoids and specific lipids.</text>
</comment>
<comment type="subunit">
    <text evidence="2">Heterodimer of an alpha subunit and a beta subunit. PSII is composed of 1 copy each of membrane proteins PsbA, PsbB, PsbC, PsbD, PsbE, PsbF, PsbH, PsbI, PsbJ, PsbK, PsbL, PsbM, PsbT, PsbX, PsbY, Psb30/Ycf12, peripheral proteins PsbO, CyanoQ (PsbQ), PsbU, PsbV and a large number of cofactors. It forms dimeric complexes.</text>
</comment>
<comment type="subcellular location">
    <subcellularLocation>
        <location evidence="1">Cellular thylakoid membrane</location>
        <topology evidence="1">Single-pass membrane protein</topology>
    </subcellularLocation>
</comment>
<comment type="similarity">
    <text evidence="1">Belongs to the PsbE/PsbF family.</text>
</comment>
<keyword id="KW-0249">Electron transport</keyword>
<keyword id="KW-0349">Heme</keyword>
<keyword id="KW-0408">Iron</keyword>
<keyword id="KW-0472">Membrane</keyword>
<keyword id="KW-0479">Metal-binding</keyword>
<keyword id="KW-0602">Photosynthesis</keyword>
<keyword id="KW-0604">Photosystem II</keyword>
<keyword id="KW-0793">Thylakoid</keyword>
<keyword id="KW-0812">Transmembrane</keyword>
<keyword id="KW-1133">Transmembrane helix</keyword>
<keyword id="KW-0813">Transport</keyword>
<feature type="chain" id="PRO_1000056931" description="Cytochrome b559 subunit alpha">
    <location>
        <begin position="1"/>
        <end position="84"/>
    </location>
</feature>
<feature type="transmembrane region" description="Helical" evidence="1">
    <location>
        <begin position="24"/>
        <end position="38"/>
    </location>
</feature>
<feature type="binding site" description="axial binding residue" evidence="1">
    <location>
        <position position="26"/>
    </location>
    <ligand>
        <name>heme</name>
        <dbReference type="ChEBI" id="CHEBI:30413"/>
        <note>ligand shared with beta subunit</note>
    </ligand>
    <ligandPart>
        <name>Fe</name>
        <dbReference type="ChEBI" id="CHEBI:18248"/>
    </ligandPart>
</feature>
<name>PSBE_PROMS</name>
<proteinExistence type="inferred from homology"/>
<reference key="1">
    <citation type="journal article" date="2007" name="PLoS Genet.">
        <title>Patterns and implications of gene gain and loss in the evolution of Prochlorococcus.</title>
        <authorList>
            <person name="Kettler G.C."/>
            <person name="Martiny A.C."/>
            <person name="Huang K."/>
            <person name="Zucker J."/>
            <person name="Coleman M.L."/>
            <person name="Rodrigue S."/>
            <person name="Chen F."/>
            <person name="Lapidus A."/>
            <person name="Ferriera S."/>
            <person name="Johnson J."/>
            <person name="Steglich C."/>
            <person name="Church G.M."/>
            <person name="Richardson P."/>
            <person name="Chisholm S.W."/>
        </authorList>
    </citation>
    <scope>NUCLEOTIDE SEQUENCE [LARGE SCALE GENOMIC DNA]</scope>
    <source>
        <strain>AS9601</strain>
    </source>
</reference>
<gene>
    <name evidence="1" type="primary">psbE</name>
    <name type="ordered locus">A9601_03201</name>
</gene>
<accession>A2BP97</accession>
<protein>
    <recommendedName>
        <fullName evidence="1">Cytochrome b559 subunit alpha</fullName>
    </recommendedName>
    <alternativeName>
        <fullName evidence="1">PSII reaction center subunit V</fullName>
    </alternativeName>
</protein>